<sequence length="295" mass="32035">MTIKAPALNLPGLGADPLTQRIKEKEKKWKYKVAVLSGKGGVGKSTVAVNLTAALAKMGYFVGILDADIHGPNVAKMLGVEKEEIYAEKFDDGHFEMIPPMADFMGQVTPIKVMSMGMMVPEDQPIIWRGALVTKAIKQLLGDVKWGSLDFMIIDFPPGTGDEILTVVQSIQLDAAIIVTTPQEVALLDTGKAVNMMKKMEVPYIAVVENMSYLICPHCGNKIDIFGEGGGEKLAEKEGVDFLGKIPIDLKAREASDLGIPIVLYGDTPAAKAFMEIAEKLVNKLKEMKGDEKKE</sequence>
<feature type="chain" id="PRO_0000184954" description="Iron-sulfur cluster carrier protein">
    <location>
        <begin position="1"/>
        <end position="295"/>
    </location>
</feature>
<feature type="binding site" evidence="1">
    <location>
        <begin position="38"/>
        <end position="45"/>
    </location>
    <ligand>
        <name>ATP</name>
        <dbReference type="ChEBI" id="CHEBI:30616"/>
    </ligand>
</feature>
<name>APBC_PYRAB</name>
<dbReference type="EMBL" id="AJ248285">
    <property type="protein sequence ID" value="CAB49765.1"/>
    <property type="molecule type" value="Genomic_DNA"/>
</dbReference>
<dbReference type="EMBL" id="HE613800">
    <property type="protein sequence ID" value="CCE70256.1"/>
    <property type="molecule type" value="Genomic_DNA"/>
</dbReference>
<dbReference type="PIR" id="D75131">
    <property type="entry name" value="D75131"/>
</dbReference>
<dbReference type="RefSeq" id="WP_010867974.1">
    <property type="nucleotide sequence ID" value="NC_000868.1"/>
</dbReference>
<dbReference type="SMR" id="Q9V0D9"/>
<dbReference type="STRING" id="272844.PAB1795"/>
<dbReference type="KEGG" id="pab:PAB1795"/>
<dbReference type="PATRIC" id="fig|272844.11.peg.900"/>
<dbReference type="eggNOG" id="arCOG00585">
    <property type="taxonomic scope" value="Archaea"/>
</dbReference>
<dbReference type="HOGENOM" id="CLU_024839_0_1_2"/>
<dbReference type="OrthoDB" id="8297at2157"/>
<dbReference type="PhylomeDB" id="Q9V0D9"/>
<dbReference type="Proteomes" id="UP000000810">
    <property type="component" value="Chromosome"/>
</dbReference>
<dbReference type="Proteomes" id="UP000009139">
    <property type="component" value="Chromosome"/>
</dbReference>
<dbReference type="GO" id="GO:0051539">
    <property type="term" value="F:4 iron, 4 sulfur cluster binding"/>
    <property type="evidence" value="ECO:0007669"/>
    <property type="project" value="TreeGrafter"/>
</dbReference>
<dbReference type="GO" id="GO:0005524">
    <property type="term" value="F:ATP binding"/>
    <property type="evidence" value="ECO:0007669"/>
    <property type="project" value="UniProtKB-UniRule"/>
</dbReference>
<dbReference type="GO" id="GO:0016887">
    <property type="term" value="F:ATP hydrolysis activity"/>
    <property type="evidence" value="ECO:0007669"/>
    <property type="project" value="UniProtKB-UniRule"/>
</dbReference>
<dbReference type="GO" id="GO:0140663">
    <property type="term" value="F:ATP-dependent FeS chaperone activity"/>
    <property type="evidence" value="ECO:0007669"/>
    <property type="project" value="InterPro"/>
</dbReference>
<dbReference type="GO" id="GO:0046872">
    <property type="term" value="F:metal ion binding"/>
    <property type="evidence" value="ECO:0007669"/>
    <property type="project" value="UniProtKB-KW"/>
</dbReference>
<dbReference type="GO" id="GO:0016226">
    <property type="term" value="P:iron-sulfur cluster assembly"/>
    <property type="evidence" value="ECO:0007669"/>
    <property type="project" value="InterPro"/>
</dbReference>
<dbReference type="CDD" id="cd02037">
    <property type="entry name" value="Mrp_NBP35"/>
    <property type="match status" value="1"/>
</dbReference>
<dbReference type="FunFam" id="3.40.50.300:FF:001119">
    <property type="entry name" value="Iron-sulfur cluster carrier protein"/>
    <property type="match status" value="1"/>
</dbReference>
<dbReference type="Gene3D" id="3.40.50.300">
    <property type="entry name" value="P-loop containing nucleotide triphosphate hydrolases"/>
    <property type="match status" value="1"/>
</dbReference>
<dbReference type="HAMAP" id="MF_02040">
    <property type="entry name" value="Mrp_NBP35"/>
    <property type="match status" value="1"/>
</dbReference>
<dbReference type="InterPro" id="IPR000808">
    <property type="entry name" value="Mrp-like_CS"/>
</dbReference>
<dbReference type="InterPro" id="IPR019591">
    <property type="entry name" value="Mrp/NBP35_ATP-bd"/>
</dbReference>
<dbReference type="InterPro" id="IPR044304">
    <property type="entry name" value="NUBPL-like"/>
</dbReference>
<dbReference type="InterPro" id="IPR027417">
    <property type="entry name" value="P-loop_NTPase"/>
</dbReference>
<dbReference type="InterPro" id="IPR033756">
    <property type="entry name" value="YlxH/NBP35"/>
</dbReference>
<dbReference type="PANTHER" id="PTHR42961">
    <property type="entry name" value="IRON-SULFUR PROTEIN NUBPL"/>
    <property type="match status" value="1"/>
</dbReference>
<dbReference type="PANTHER" id="PTHR42961:SF2">
    <property type="entry name" value="IRON-SULFUR PROTEIN NUBPL"/>
    <property type="match status" value="1"/>
</dbReference>
<dbReference type="Pfam" id="PF10609">
    <property type="entry name" value="ParA"/>
    <property type="match status" value="1"/>
</dbReference>
<dbReference type="SUPFAM" id="SSF52540">
    <property type="entry name" value="P-loop containing nucleoside triphosphate hydrolases"/>
    <property type="match status" value="1"/>
</dbReference>
<dbReference type="PROSITE" id="PS01215">
    <property type="entry name" value="MRP"/>
    <property type="match status" value="1"/>
</dbReference>
<comment type="function">
    <text evidence="1">Binds and transfers iron-sulfur (Fe-S) clusters to target apoproteins. Can hydrolyze ATP.</text>
</comment>
<comment type="subunit">
    <text evidence="1">Homodimer.</text>
</comment>
<comment type="similarity">
    <text evidence="1">Belongs to the Mrp/NBP35 ATP-binding proteins family.</text>
</comment>
<organism>
    <name type="scientific">Pyrococcus abyssi (strain GE5 / Orsay)</name>
    <dbReference type="NCBI Taxonomy" id="272844"/>
    <lineage>
        <taxon>Archaea</taxon>
        <taxon>Methanobacteriati</taxon>
        <taxon>Methanobacteriota</taxon>
        <taxon>Thermococci</taxon>
        <taxon>Thermococcales</taxon>
        <taxon>Thermococcaceae</taxon>
        <taxon>Pyrococcus</taxon>
    </lineage>
</organism>
<protein>
    <recommendedName>
        <fullName evidence="1">Iron-sulfur cluster carrier protein</fullName>
    </recommendedName>
</protein>
<gene>
    <name type="ordered locus">PYRAB08510</name>
    <name type="ORF">PAB1795</name>
</gene>
<keyword id="KW-0067">ATP-binding</keyword>
<keyword id="KW-0378">Hydrolase</keyword>
<keyword id="KW-0408">Iron</keyword>
<keyword id="KW-0411">Iron-sulfur</keyword>
<keyword id="KW-0479">Metal-binding</keyword>
<keyword id="KW-0547">Nucleotide-binding</keyword>
<evidence type="ECO:0000255" key="1">
    <source>
        <dbReference type="HAMAP-Rule" id="MF_02040"/>
    </source>
</evidence>
<reference key="1">
    <citation type="journal article" date="2003" name="Mol. Microbiol.">
        <title>An integrated analysis of the genome of the hyperthermophilic archaeon Pyrococcus abyssi.</title>
        <authorList>
            <person name="Cohen G.N."/>
            <person name="Barbe V."/>
            <person name="Flament D."/>
            <person name="Galperin M."/>
            <person name="Heilig R."/>
            <person name="Lecompte O."/>
            <person name="Poch O."/>
            <person name="Prieur D."/>
            <person name="Querellou J."/>
            <person name="Ripp R."/>
            <person name="Thierry J.-C."/>
            <person name="Van der Oost J."/>
            <person name="Weissenbach J."/>
            <person name="Zivanovic Y."/>
            <person name="Forterre P."/>
        </authorList>
    </citation>
    <scope>NUCLEOTIDE SEQUENCE [LARGE SCALE GENOMIC DNA]</scope>
    <source>
        <strain>GE5 / Orsay</strain>
    </source>
</reference>
<reference key="2">
    <citation type="journal article" date="2012" name="Curr. Microbiol.">
        <title>Re-annotation of two hyperthermophilic archaea Pyrococcus abyssi GE5 and Pyrococcus furiosus DSM 3638.</title>
        <authorList>
            <person name="Gao J."/>
            <person name="Wang J."/>
        </authorList>
    </citation>
    <scope>GENOME REANNOTATION</scope>
    <source>
        <strain>GE5 / Orsay</strain>
    </source>
</reference>
<proteinExistence type="inferred from homology"/>
<accession>Q9V0D9</accession>
<accession>G8ZH61</accession>